<gene>
    <name evidence="21" type="primary">LCT</name>
    <name evidence="14" type="synonym">LPH</name>
</gene>
<reference key="1">
    <citation type="journal article" date="1988" name="EMBO J.">
        <title>Complete primary structure of human and rabbit lactase-phlorizin hydrolase: implications for biosynthesis, membrane anchoring and evolution of the enzyme.</title>
        <authorList>
            <person name="Mantei N."/>
            <person name="Villa M."/>
            <person name="Enzler T."/>
            <person name="Wacker H."/>
            <person name="Boll W."/>
            <person name="James P."/>
            <person name="Hunziker W."/>
            <person name="Semenza G."/>
        </authorList>
    </citation>
    <scope>NUCLEOTIDE SEQUENCE [MRNA]</scope>
    <scope>VARIANT VAL-362</scope>
</reference>
<reference key="2">
    <citation type="journal article" date="1991" name="Am. J. Hum. Genet.">
        <title>Structure of the chromosomal gene and cDNAs coding for lactase-phlorizin hydrolase in humans with adult-type hypolactasia or persistence of lactase.</title>
        <authorList>
            <person name="Boll W."/>
            <person name="Wagner P."/>
            <person name="Mantei N."/>
        </authorList>
    </citation>
    <scope>NUCLEOTIDE SEQUENCE [GENOMIC DNA]</scope>
    <scope>VARIANTS ILE-219; VAL-362 AND SER-1639</scope>
</reference>
<reference key="3">
    <citation type="journal article" date="2005" name="Nature">
        <title>Generation and annotation of the DNA sequences of human chromosomes 2 and 4.</title>
        <authorList>
            <person name="Hillier L.W."/>
            <person name="Graves T.A."/>
            <person name="Fulton R.S."/>
            <person name="Fulton L.A."/>
            <person name="Pepin K.H."/>
            <person name="Minx P."/>
            <person name="Wagner-McPherson C."/>
            <person name="Layman D."/>
            <person name="Wylie K."/>
            <person name="Sekhon M."/>
            <person name="Becker M.C."/>
            <person name="Fewell G.A."/>
            <person name="Delehaunty K.D."/>
            <person name="Miner T.L."/>
            <person name="Nash W.E."/>
            <person name="Kremitzki C."/>
            <person name="Oddy L."/>
            <person name="Du H."/>
            <person name="Sun H."/>
            <person name="Bradshaw-Cordum H."/>
            <person name="Ali J."/>
            <person name="Carter J."/>
            <person name="Cordes M."/>
            <person name="Harris A."/>
            <person name="Isak A."/>
            <person name="van Brunt A."/>
            <person name="Nguyen C."/>
            <person name="Du F."/>
            <person name="Courtney L."/>
            <person name="Kalicki J."/>
            <person name="Ozersky P."/>
            <person name="Abbott S."/>
            <person name="Armstrong J."/>
            <person name="Belter E.A."/>
            <person name="Caruso L."/>
            <person name="Cedroni M."/>
            <person name="Cotton M."/>
            <person name="Davidson T."/>
            <person name="Desai A."/>
            <person name="Elliott G."/>
            <person name="Erb T."/>
            <person name="Fronick C."/>
            <person name="Gaige T."/>
            <person name="Haakenson W."/>
            <person name="Haglund K."/>
            <person name="Holmes A."/>
            <person name="Harkins R."/>
            <person name="Kim K."/>
            <person name="Kruchowski S.S."/>
            <person name="Strong C.M."/>
            <person name="Grewal N."/>
            <person name="Goyea E."/>
            <person name="Hou S."/>
            <person name="Levy A."/>
            <person name="Martinka S."/>
            <person name="Mead K."/>
            <person name="McLellan M.D."/>
            <person name="Meyer R."/>
            <person name="Randall-Maher J."/>
            <person name="Tomlinson C."/>
            <person name="Dauphin-Kohlberg S."/>
            <person name="Kozlowicz-Reilly A."/>
            <person name="Shah N."/>
            <person name="Swearengen-Shahid S."/>
            <person name="Snider J."/>
            <person name="Strong J.T."/>
            <person name="Thompson J."/>
            <person name="Yoakum M."/>
            <person name="Leonard S."/>
            <person name="Pearman C."/>
            <person name="Trani L."/>
            <person name="Radionenko M."/>
            <person name="Waligorski J.E."/>
            <person name="Wang C."/>
            <person name="Rock S.M."/>
            <person name="Tin-Wollam A.-M."/>
            <person name="Maupin R."/>
            <person name="Latreille P."/>
            <person name="Wendl M.C."/>
            <person name="Yang S.-P."/>
            <person name="Pohl C."/>
            <person name="Wallis J.W."/>
            <person name="Spieth J."/>
            <person name="Bieri T.A."/>
            <person name="Berkowicz N."/>
            <person name="Nelson J.O."/>
            <person name="Osborne J."/>
            <person name="Ding L."/>
            <person name="Meyer R."/>
            <person name="Sabo A."/>
            <person name="Shotland Y."/>
            <person name="Sinha P."/>
            <person name="Wohldmann P.E."/>
            <person name="Cook L.L."/>
            <person name="Hickenbotham M.T."/>
            <person name="Eldred J."/>
            <person name="Williams D."/>
            <person name="Jones T.A."/>
            <person name="She X."/>
            <person name="Ciccarelli F.D."/>
            <person name="Izaurralde E."/>
            <person name="Taylor J."/>
            <person name="Schmutz J."/>
            <person name="Myers R.M."/>
            <person name="Cox D.R."/>
            <person name="Huang X."/>
            <person name="McPherson J.D."/>
            <person name="Mardis E.R."/>
            <person name="Clifton S.W."/>
            <person name="Warren W.C."/>
            <person name="Chinwalla A.T."/>
            <person name="Eddy S.R."/>
            <person name="Marra M.A."/>
            <person name="Ovcharenko I."/>
            <person name="Furey T.S."/>
            <person name="Miller W."/>
            <person name="Eichler E.E."/>
            <person name="Bork P."/>
            <person name="Suyama M."/>
            <person name="Torrents D."/>
            <person name="Waterston R.H."/>
            <person name="Wilson R.K."/>
        </authorList>
    </citation>
    <scope>NUCLEOTIDE SEQUENCE [LARGE SCALE GENOMIC DNA]</scope>
</reference>
<reference key="4">
    <citation type="journal article" date="1985" name="Biochem. Genet.">
        <title>Human lactase and the molecular basis of lactase persistence.</title>
        <authorList>
            <person name="Potter J."/>
            <person name="Ho M.W."/>
            <person name="Bolton H."/>
            <person name="Furth A.J."/>
            <person name="Swallow D.M."/>
            <person name="Griffiths B."/>
        </authorList>
    </citation>
    <scope>FUNCTION</scope>
    <scope>CATALYTIC ACTIVITY</scope>
    <scope>SUBUNIT</scope>
</reference>
<reference key="5">
    <citation type="journal article" date="1998" name="FEBS Lett.">
        <title>Intestinal lactase-phlorizin hydrolase (LPH): the two catalytic sites; the role of the pancreas in pro-LPH maturation.</title>
        <authorList>
            <person name="Zecca L."/>
            <person name="Mesonero J.E."/>
            <person name="Stutz A."/>
            <person name="Poiree J.C."/>
            <person name="Giudicelli J."/>
            <person name="Cursio R."/>
            <person name="Gloor S.M."/>
            <person name="Semenza G."/>
        </authorList>
    </citation>
    <scope>FUNCTION</scope>
    <scope>CATALYTIC ACTIVITY</scope>
    <scope>DOMAIN</scope>
    <scope>REGION</scope>
    <scope>ACTIVE SITE</scope>
    <scope>MUTAGENESIS OF GLU-1273 AND GLU-1749</scope>
</reference>
<reference key="6">
    <citation type="journal article" date="1998" name="J. Biol. Chem.">
        <title>Protein domains implicated in intracellular transport and sorting of lactase-phlorizin hydrolase.</title>
        <authorList>
            <person name="Panzer P."/>
            <person name="Preuss U."/>
            <person name="Joberty G."/>
            <person name="Naim H.Y."/>
        </authorList>
    </citation>
    <scope>SUBUNIT</scope>
    <scope>SUBCELLULAR LOCATION</scope>
    <scope>TOPOLOGY</scope>
    <scope>GLYCOSYLATION</scope>
    <scope>REGION</scope>
</reference>
<reference key="7">
    <citation type="journal article" date="2002" name="Nat. Genet.">
        <title>Identification of a variant associated with adult-type hypolactasia.</title>
        <authorList>
            <person name="Enattah N.S."/>
            <person name="Sahi T."/>
            <person name="Savilahti E."/>
            <person name="Terwilliger J.D."/>
            <person name="Peltonen L."/>
            <person name="Jaervelae I."/>
        </authorList>
    </citation>
    <scope>INVOLVEMENT IN ADULT-TYPE HYPOLACTASIA</scope>
</reference>
<reference key="8">
    <citation type="journal article" date="2003" name="Eur. J. Nutr.">
        <title>Deglycosylation by small intestinal epithelial cell beta-glucosidases is a critical step in the absorption and metabolism of dietary flavonoid glycosides in humans.</title>
        <authorList>
            <person name="Nemeth K."/>
            <person name="Plumb G.W."/>
            <person name="Berrin J.-G."/>
            <person name="Juge N."/>
            <person name="Jacob R."/>
            <person name="Naim H.Y."/>
            <person name="Williamson G."/>
            <person name="Swallow D.M."/>
            <person name="Kroon P.A."/>
        </authorList>
    </citation>
    <scope>FUNCTION</scope>
    <scope>CATALYTIC ACTIVITY</scope>
</reference>
<reference key="9">
    <citation type="journal article" date="2006" name="Am. J. Hum. Genet.">
        <title>Mutations in the translated region of the lactase gene (LCT) underlie congenital lactase deficiency.</title>
        <authorList>
            <person name="Kuokkanen M."/>
            <person name="Kokkonen J."/>
            <person name="Enattah N.S."/>
            <person name="Ylisaukko-Oja T."/>
            <person name="Komu H."/>
            <person name="Varilo T."/>
            <person name="Peltonen L."/>
            <person name="Savilahti E."/>
            <person name="Jaervelae I."/>
        </authorList>
    </citation>
    <scope>VARIANTS COLACD HIS-268 AND SER-1363</scope>
    <scope>FUNCTION</scope>
    <scope>CATALYTIC ACTIVITY</scope>
</reference>
<dbReference type="EC" id="3.2.1.108" evidence="7 8 11 13"/>
<dbReference type="EC" id="3.2.1.62" evidence="2"/>
<dbReference type="EMBL" id="X07994">
    <property type="protein sequence ID" value="CAA30801.1"/>
    <property type="molecule type" value="mRNA"/>
</dbReference>
<dbReference type="EMBL" id="M61850">
    <property type="protein sequence ID" value="AAA59504.1"/>
    <property type="molecule type" value="Genomic_DNA"/>
</dbReference>
<dbReference type="EMBL" id="M61834">
    <property type="protein sequence ID" value="AAA59504.1"/>
    <property type="status" value="JOINED"/>
    <property type="molecule type" value="Genomic_DNA"/>
</dbReference>
<dbReference type="EMBL" id="M61835">
    <property type="protein sequence ID" value="AAA59504.1"/>
    <property type="status" value="JOINED"/>
    <property type="molecule type" value="Genomic_DNA"/>
</dbReference>
<dbReference type="EMBL" id="M61836">
    <property type="protein sequence ID" value="AAA59504.1"/>
    <property type="status" value="JOINED"/>
    <property type="molecule type" value="Genomic_DNA"/>
</dbReference>
<dbReference type="EMBL" id="M61837">
    <property type="protein sequence ID" value="AAA59504.1"/>
    <property type="status" value="JOINED"/>
    <property type="molecule type" value="Genomic_DNA"/>
</dbReference>
<dbReference type="EMBL" id="M61838">
    <property type="protein sequence ID" value="AAA59504.1"/>
    <property type="status" value="JOINED"/>
    <property type="molecule type" value="Genomic_DNA"/>
</dbReference>
<dbReference type="EMBL" id="M61839">
    <property type="protein sequence ID" value="AAA59504.1"/>
    <property type="status" value="JOINED"/>
    <property type="molecule type" value="Genomic_DNA"/>
</dbReference>
<dbReference type="EMBL" id="M61840">
    <property type="protein sequence ID" value="AAA59504.1"/>
    <property type="status" value="JOINED"/>
    <property type="molecule type" value="Genomic_DNA"/>
</dbReference>
<dbReference type="EMBL" id="M61841">
    <property type="protein sequence ID" value="AAA59504.1"/>
    <property type="status" value="JOINED"/>
    <property type="molecule type" value="Genomic_DNA"/>
</dbReference>
<dbReference type="EMBL" id="M61842">
    <property type="protein sequence ID" value="AAA59504.1"/>
    <property type="status" value="JOINED"/>
    <property type="molecule type" value="Genomic_DNA"/>
</dbReference>
<dbReference type="EMBL" id="M61843">
    <property type="protein sequence ID" value="AAA59504.1"/>
    <property type="status" value="JOINED"/>
    <property type="molecule type" value="Genomic_DNA"/>
</dbReference>
<dbReference type="EMBL" id="M61844">
    <property type="protein sequence ID" value="AAA59504.1"/>
    <property type="status" value="JOINED"/>
    <property type="molecule type" value="Genomic_DNA"/>
</dbReference>
<dbReference type="EMBL" id="M61845">
    <property type="protein sequence ID" value="AAA59504.1"/>
    <property type="status" value="JOINED"/>
    <property type="molecule type" value="Genomic_DNA"/>
</dbReference>
<dbReference type="EMBL" id="M61846">
    <property type="protein sequence ID" value="AAA59504.1"/>
    <property type="status" value="JOINED"/>
    <property type="molecule type" value="Genomic_DNA"/>
</dbReference>
<dbReference type="EMBL" id="M61847">
    <property type="protein sequence ID" value="AAA59504.1"/>
    <property type="status" value="JOINED"/>
    <property type="molecule type" value="Genomic_DNA"/>
</dbReference>
<dbReference type="EMBL" id="M61848">
    <property type="protein sequence ID" value="AAA59504.1"/>
    <property type="status" value="JOINED"/>
    <property type="molecule type" value="Genomic_DNA"/>
</dbReference>
<dbReference type="EMBL" id="M61849">
    <property type="protein sequence ID" value="AAA59504.1"/>
    <property type="status" value="JOINED"/>
    <property type="molecule type" value="Genomic_DNA"/>
</dbReference>
<dbReference type="EMBL" id="AC011893">
    <property type="protein sequence ID" value="AAX88924.1"/>
    <property type="molecule type" value="Genomic_DNA"/>
</dbReference>
<dbReference type="CCDS" id="CCDS2178.1"/>
<dbReference type="PIR" id="S01168">
    <property type="entry name" value="S01168"/>
</dbReference>
<dbReference type="RefSeq" id="NP_002290.2">
    <property type="nucleotide sequence ID" value="NM_002299.3"/>
</dbReference>
<dbReference type="SMR" id="P09848"/>
<dbReference type="BioGRID" id="110130">
    <property type="interactions" value="5"/>
</dbReference>
<dbReference type="FunCoup" id="P09848">
    <property type="interactions" value="81"/>
</dbReference>
<dbReference type="IntAct" id="P09848">
    <property type="interactions" value="1"/>
</dbReference>
<dbReference type="MINT" id="P09848"/>
<dbReference type="STRING" id="9606.ENSP00000264162"/>
<dbReference type="BindingDB" id="P09848"/>
<dbReference type="ChEMBL" id="CHEMBL1075131"/>
<dbReference type="DrugBank" id="DB04659">
    <property type="generic name" value="(1S,2S,3R,4S,5S)-2,3,4-TRIHYDROXY-5-(HYDROXYMETHYL)CYCLOHEXYL (1E)-2-PHENYL-N-(SULFOOXY)ETHANIMIDOTHIOATE"/>
</dbReference>
<dbReference type="DrugBank" id="DB04282">
    <property type="generic name" value="2-deoxy-2-fluoro-Alpha-D-glucose"/>
</dbReference>
<dbReference type="DrugBank" id="DB08558">
    <property type="generic name" value="2-HYDROXYMETHYL-6-OCTYLSULFANYL-TETRAHYDRO-PYRAN-3,4,5-TRIOL"/>
</dbReference>
<dbReference type="DrugBank" id="DB03389">
    <property type="generic name" value="alpha-D-Xylopyranose"/>
</dbReference>
<dbReference type="DrugBank" id="DB02376">
    <property type="generic name" value="D-gluconhydroximo-1,5-lactam"/>
</dbReference>
<dbReference type="DrugBank" id="DB04779">
    <property type="generic name" value="ETHYL (1E)-2-PHENYL-N-(SULFOOXY)ETHANIMIDOTHIOATE"/>
</dbReference>
<dbReference type="DrugBank" id="DB04564">
    <property type="generic name" value="Gluconolactone"/>
</dbReference>
<dbReference type="DrugBank" id="DB02471">
    <property type="generic name" value="Nojirimycine Tetrazole"/>
</dbReference>
<dbReference type="DrugCentral" id="P09848"/>
<dbReference type="CAZy" id="GH1">
    <property type="family name" value="Glycoside Hydrolase Family 1"/>
</dbReference>
<dbReference type="GlyCosmos" id="P09848">
    <property type="glycosylation" value="15 sites, No reported glycans"/>
</dbReference>
<dbReference type="GlyGen" id="P09848">
    <property type="glycosylation" value="16 sites"/>
</dbReference>
<dbReference type="iPTMnet" id="P09848"/>
<dbReference type="PhosphoSitePlus" id="P09848"/>
<dbReference type="BioMuta" id="LCT"/>
<dbReference type="DMDM" id="311033425"/>
<dbReference type="jPOST" id="P09848"/>
<dbReference type="MassIVE" id="P09848"/>
<dbReference type="PaxDb" id="9606-ENSP00000264162"/>
<dbReference type="PeptideAtlas" id="P09848"/>
<dbReference type="ProteomicsDB" id="52269"/>
<dbReference type="Antibodypedia" id="2365">
    <property type="antibodies" value="388 antibodies from 15 providers"/>
</dbReference>
<dbReference type="DNASU" id="3938"/>
<dbReference type="Ensembl" id="ENST00000264162.7">
    <property type="protein sequence ID" value="ENSP00000264162.2"/>
    <property type="gene ID" value="ENSG00000115850.10"/>
</dbReference>
<dbReference type="GeneID" id="3938"/>
<dbReference type="KEGG" id="hsa:3938"/>
<dbReference type="MANE-Select" id="ENST00000264162.7">
    <property type="protein sequence ID" value="ENSP00000264162.2"/>
    <property type="RefSeq nucleotide sequence ID" value="NM_002299.4"/>
    <property type="RefSeq protein sequence ID" value="NP_002290.2"/>
</dbReference>
<dbReference type="UCSC" id="uc002tuu.2">
    <property type="organism name" value="human"/>
</dbReference>
<dbReference type="AGR" id="HGNC:6530"/>
<dbReference type="CTD" id="3938"/>
<dbReference type="DisGeNET" id="3938"/>
<dbReference type="GeneCards" id="LCT"/>
<dbReference type="HGNC" id="HGNC:6530">
    <property type="gene designation" value="LCT"/>
</dbReference>
<dbReference type="HPA" id="ENSG00000115850">
    <property type="expression patterns" value="Tissue enriched (intestine)"/>
</dbReference>
<dbReference type="MalaCards" id="LCT"/>
<dbReference type="MIM" id="223000">
    <property type="type" value="phenotype"/>
</dbReference>
<dbReference type="MIM" id="603202">
    <property type="type" value="gene"/>
</dbReference>
<dbReference type="neXtProt" id="NX_P09848"/>
<dbReference type="OpenTargets" id="ENSG00000115850"/>
<dbReference type="Orphanet" id="53690">
    <property type="disease" value="Congenital lactase deficiency"/>
</dbReference>
<dbReference type="PharmGKB" id="PA30315"/>
<dbReference type="VEuPathDB" id="HostDB:ENSG00000115850"/>
<dbReference type="eggNOG" id="KOG0626">
    <property type="taxonomic scope" value="Eukaryota"/>
</dbReference>
<dbReference type="GeneTree" id="ENSGT00940000155324"/>
<dbReference type="HOGENOM" id="CLU_001859_5_3_1"/>
<dbReference type="InParanoid" id="P09848"/>
<dbReference type="OMA" id="AHWAEPK"/>
<dbReference type="OrthoDB" id="65569at2759"/>
<dbReference type="PAN-GO" id="P09848">
    <property type="GO annotations" value="1 GO annotation based on evolutionary models"/>
</dbReference>
<dbReference type="PhylomeDB" id="P09848"/>
<dbReference type="TreeFam" id="TF314803"/>
<dbReference type="BioCyc" id="MetaCyc:HS03945-MONOMER"/>
<dbReference type="BRENDA" id="3.2.1.108">
    <property type="organism ID" value="2681"/>
</dbReference>
<dbReference type="BRENDA" id="3.2.1.62">
    <property type="organism ID" value="2681"/>
</dbReference>
<dbReference type="BRENDA" id="3.7.1.4">
    <property type="organism ID" value="2681"/>
</dbReference>
<dbReference type="PathwayCommons" id="P09848"/>
<dbReference type="Reactome" id="R-HSA-189085">
    <property type="pathway name" value="Digestion of dietary carbohydrate"/>
</dbReference>
<dbReference type="Reactome" id="R-HSA-5659898">
    <property type="pathway name" value="Intestinal saccharidase deficiencies"/>
</dbReference>
<dbReference type="SignaLink" id="P09848"/>
<dbReference type="SIGNOR" id="P09848"/>
<dbReference type="BioGRID-ORCS" id="3938">
    <property type="hits" value="11 hits in 1153 CRISPR screens"/>
</dbReference>
<dbReference type="ChiTaRS" id="LCT">
    <property type="organism name" value="human"/>
</dbReference>
<dbReference type="GenomeRNAi" id="3938"/>
<dbReference type="Pharos" id="P09848">
    <property type="development level" value="Tbio"/>
</dbReference>
<dbReference type="PRO" id="PR:P09848"/>
<dbReference type="Proteomes" id="UP000005640">
    <property type="component" value="Chromosome 2"/>
</dbReference>
<dbReference type="RNAct" id="P09848">
    <property type="molecule type" value="protein"/>
</dbReference>
<dbReference type="Bgee" id="ENSG00000115850">
    <property type="expression patterns" value="Expressed in jejunal mucosa and 14 other cell types or tissues"/>
</dbReference>
<dbReference type="ExpressionAtlas" id="P09848">
    <property type="expression patterns" value="baseline and differential"/>
</dbReference>
<dbReference type="GO" id="GO:0098591">
    <property type="term" value="C:external side of apical plasma membrane"/>
    <property type="evidence" value="ECO:0000314"/>
    <property type="project" value="UniProtKB"/>
</dbReference>
<dbReference type="GO" id="GO:0005886">
    <property type="term" value="C:plasma membrane"/>
    <property type="evidence" value="ECO:0000304"/>
    <property type="project" value="Reactome"/>
</dbReference>
<dbReference type="GO" id="GO:0008422">
    <property type="term" value="F:beta-glucosidase activity"/>
    <property type="evidence" value="ECO:0000314"/>
    <property type="project" value="UniProtKB"/>
</dbReference>
<dbReference type="GO" id="GO:0080079">
    <property type="term" value="F:cellobiose glucosidase activity"/>
    <property type="evidence" value="ECO:0007669"/>
    <property type="project" value="RHEA"/>
</dbReference>
<dbReference type="GO" id="GO:0004336">
    <property type="term" value="F:galactosylceramidase activity"/>
    <property type="evidence" value="ECO:0000250"/>
    <property type="project" value="UniProtKB"/>
</dbReference>
<dbReference type="GO" id="GO:0004348">
    <property type="term" value="F:glucosylceramidase activity"/>
    <property type="evidence" value="ECO:0000250"/>
    <property type="project" value="UniProtKB"/>
</dbReference>
<dbReference type="GO" id="GO:0000016">
    <property type="term" value="F:lactase activity"/>
    <property type="evidence" value="ECO:0000314"/>
    <property type="project" value="UniProtKB"/>
</dbReference>
<dbReference type="GO" id="GO:0140749">
    <property type="term" value="F:phlorizin hydrolase activity"/>
    <property type="evidence" value="ECO:0000314"/>
    <property type="project" value="UniProtKB"/>
</dbReference>
<dbReference type="GO" id="GO:0042803">
    <property type="term" value="F:protein homodimerization activity"/>
    <property type="evidence" value="ECO:0000314"/>
    <property type="project" value="UniProtKB"/>
</dbReference>
<dbReference type="GO" id="GO:2000892">
    <property type="term" value="P:cellobiose catabolic process"/>
    <property type="evidence" value="ECO:0000314"/>
    <property type="project" value="UniProtKB"/>
</dbReference>
<dbReference type="GO" id="GO:0046477">
    <property type="term" value="P:glycosylceramide catabolic process"/>
    <property type="evidence" value="ECO:0000250"/>
    <property type="project" value="UniProtKB"/>
</dbReference>
<dbReference type="GO" id="GO:0005990">
    <property type="term" value="P:lactose catabolic process"/>
    <property type="evidence" value="ECO:0000314"/>
    <property type="project" value="UniProtKB"/>
</dbReference>
<dbReference type="GO" id="GO:1901733">
    <property type="term" value="P:quercetin catabolic process"/>
    <property type="evidence" value="ECO:0000314"/>
    <property type="project" value="UniProtKB"/>
</dbReference>
<dbReference type="FunFam" id="3.20.20.80:FF:000117">
    <property type="entry name" value="Lactase"/>
    <property type="match status" value="1"/>
</dbReference>
<dbReference type="FunFam" id="3.20.20.80:FF:000013">
    <property type="entry name" value="lactase-phlorizin hydrolase"/>
    <property type="match status" value="3"/>
</dbReference>
<dbReference type="Gene3D" id="3.20.20.80">
    <property type="entry name" value="Glycosidases"/>
    <property type="match status" value="4"/>
</dbReference>
<dbReference type="InterPro" id="IPR001360">
    <property type="entry name" value="Glyco_hydro_1"/>
</dbReference>
<dbReference type="InterPro" id="IPR018120">
    <property type="entry name" value="Glyco_hydro_1_AS"/>
</dbReference>
<dbReference type="InterPro" id="IPR033132">
    <property type="entry name" value="Glyco_hydro_1_N_CS"/>
</dbReference>
<dbReference type="InterPro" id="IPR017853">
    <property type="entry name" value="Glycoside_hydrolase_SF"/>
</dbReference>
<dbReference type="PANTHER" id="PTHR10353">
    <property type="entry name" value="GLYCOSYL HYDROLASE"/>
    <property type="match status" value="1"/>
</dbReference>
<dbReference type="PANTHER" id="PTHR10353:SF36">
    <property type="entry name" value="LP05116P"/>
    <property type="match status" value="1"/>
</dbReference>
<dbReference type="Pfam" id="PF00232">
    <property type="entry name" value="Glyco_hydro_1"/>
    <property type="match status" value="4"/>
</dbReference>
<dbReference type="PRINTS" id="PR00131">
    <property type="entry name" value="GLHYDRLASE1"/>
</dbReference>
<dbReference type="SUPFAM" id="SSF51445">
    <property type="entry name" value="(Trans)glycosidases"/>
    <property type="match status" value="4"/>
</dbReference>
<dbReference type="PROSITE" id="PS00572">
    <property type="entry name" value="GLYCOSYL_HYDROL_F1_1"/>
    <property type="match status" value="2"/>
</dbReference>
<dbReference type="PROSITE" id="PS00653">
    <property type="entry name" value="GLYCOSYL_HYDROL_F1_2"/>
    <property type="match status" value="3"/>
</dbReference>
<proteinExistence type="evidence at protein level"/>
<keyword id="KW-1003">Cell membrane</keyword>
<keyword id="KW-0225">Disease variant</keyword>
<keyword id="KW-0325">Glycoprotein</keyword>
<keyword id="KW-0326">Glycosidase</keyword>
<keyword id="KW-0378">Hydrolase</keyword>
<keyword id="KW-0472">Membrane</keyword>
<keyword id="KW-0511">Multifunctional enzyme</keyword>
<keyword id="KW-1267">Proteomics identification</keyword>
<keyword id="KW-1185">Reference proteome</keyword>
<keyword id="KW-0732">Signal</keyword>
<keyword id="KW-0812">Transmembrane</keyword>
<keyword id="KW-1133">Transmembrane helix</keyword>
<keyword id="KW-0865">Zymogen</keyword>
<evidence type="ECO:0000250" key="1">
    <source>
        <dbReference type="UniProtKB" id="P09849"/>
    </source>
</evidence>
<evidence type="ECO:0000250" key="2">
    <source>
        <dbReference type="UniProtKB" id="Q02401"/>
    </source>
</evidence>
<evidence type="ECO:0000250" key="3">
    <source>
        <dbReference type="UniProtKB" id="W5PLZ6"/>
    </source>
</evidence>
<evidence type="ECO:0000255" key="4"/>
<evidence type="ECO:0000255" key="5">
    <source>
        <dbReference type="PROSITE-ProRule" id="PRU10055"/>
    </source>
</evidence>
<evidence type="ECO:0000256" key="6">
    <source>
        <dbReference type="SAM" id="MobiDB-lite"/>
    </source>
</evidence>
<evidence type="ECO:0000269" key="7">
    <source>
    </source>
</evidence>
<evidence type="ECO:0000269" key="8">
    <source>
    </source>
</evidence>
<evidence type="ECO:0000269" key="9">
    <source>
    </source>
</evidence>
<evidence type="ECO:0000269" key="10">
    <source>
    </source>
</evidence>
<evidence type="ECO:0000269" key="11">
    <source>
    </source>
</evidence>
<evidence type="ECO:0000269" key="12">
    <source>
    </source>
</evidence>
<evidence type="ECO:0000269" key="13">
    <source>
    </source>
</evidence>
<evidence type="ECO:0000303" key="14">
    <source>
    </source>
</evidence>
<evidence type="ECO:0000305" key="15"/>
<evidence type="ECO:0000305" key="16">
    <source>
    </source>
</evidence>
<evidence type="ECO:0000305" key="17">
    <source>
    </source>
</evidence>
<evidence type="ECO:0000305" key="18">
    <source>
    </source>
</evidence>
<evidence type="ECO:0000305" key="19">
    <source>
    </source>
</evidence>
<evidence type="ECO:0000305" key="20">
    <source>
    </source>
</evidence>
<evidence type="ECO:0000312" key="21">
    <source>
        <dbReference type="HGNC" id="HGNC:6530"/>
    </source>
</evidence>
<name>LPH_HUMAN</name>
<protein>
    <recommendedName>
        <fullName evidence="17">Lactase/phlorizin hydrolase</fullName>
    </recommendedName>
    <alternativeName>
        <fullName evidence="20">Lactase/glycosylceramidase</fullName>
    </alternativeName>
    <domain>
        <recommendedName>
            <fullName evidence="20">Lactase</fullName>
            <ecNumber evidence="7 8 11 13">3.2.1.108</ecNumber>
        </recommendedName>
    </domain>
    <domain>
        <recommendedName>
            <fullName evidence="2">Glycosylceramidase</fullName>
            <ecNumber evidence="2">3.2.1.62</ecNumber>
        </recommendedName>
        <alternativeName>
            <fullName evidence="20">Phlorizin hydrolase</fullName>
        </alternativeName>
    </domain>
</protein>
<feature type="signal peptide" evidence="4">
    <location>
        <begin position="1"/>
        <end position="19"/>
    </location>
</feature>
<feature type="propeptide" id="PRO_0000011767" description="XBetaGly" evidence="1">
    <location>
        <begin position="20"/>
        <end position="868"/>
    </location>
</feature>
<feature type="chain" id="PRO_0000011768" description="Lactase/phlorizin hydrolase" evidence="1">
    <location>
        <begin position="869"/>
        <end position="1927"/>
    </location>
</feature>
<feature type="topological domain" description="Extracellular" evidence="4">
    <location>
        <begin position="20"/>
        <end position="1882"/>
    </location>
</feature>
<feature type="transmembrane region" description="Helical" evidence="4">
    <location>
        <begin position="1883"/>
        <end position="1901"/>
    </location>
</feature>
<feature type="topological domain" description="Cytoplasmic" evidence="4">
    <location>
        <begin position="1902"/>
        <end position="1927"/>
    </location>
</feature>
<feature type="region of interest" description="Glycosyl hydrolase-1 1; Region I" evidence="4">
    <location>
        <begin position="44"/>
        <end position="286"/>
    </location>
</feature>
<feature type="region of interest" description="Glycosyl hydrolase-1 2; Region II" evidence="4">
    <location>
        <begin position="362"/>
        <end position="855"/>
    </location>
</feature>
<feature type="region of interest" description="Glycosyl hydrolase-1 3; Region III. Phlorizin hydrolase/glycosylceramidase activity" evidence="4 13">
    <location>
        <begin position="902"/>
        <end position="1366"/>
    </location>
</feature>
<feature type="region of interest" description="Disordered" evidence="6">
    <location>
        <begin position="1220"/>
        <end position="1244"/>
    </location>
</feature>
<feature type="region of interest" description="Glycosyl hydrolase-1 4; Region IV. Lactase activity" evidence="4 13">
    <location>
        <begin position="1373"/>
        <end position="1846"/>
    </location>
</feature>
<feature type="region of interest" description="Required for homodimerization and transport to the plasma membrane" evidence="12">
    <location>
        <begin position="1647"/>
        <end position="1927"/>
    </location>
</feature>
<feature type="compositionally biased region" description="Acidic residues" evidence="6">
    <location>
        <begin position="1226"/>
        <end position="1238"/>
    </location>
</feature>
<feature type="active site" description="Proton donor; for phlorizin hydrolase/Glycosylceramidase activity" evidence="20">
    <location>
        <position position="1065"/>
    </location>
</feature>
<feature type="active site" description="Nucleophile; for phlorizin hydrolase/Glycosylceramidase activity" evidence="5 20">
    <location>
        <position position="1273"/>
    </location>
</feature>
<feature type="active site" description="Proton donor; for lactase activity" evidence="20">
    <location>
        <position position="1538"/>
    </location>
</feature>
<feature type="active site" description="Nucleophile; for lactase activity" evidence="5 20">
    <location>
        <position position="1749"/>
    </location>
</feature>
<feature type="glycosylation site" description="N-linked (GlcNAc...) asparagine" evidence="4">
    <location>
        <position position="42"/>
    </location>
</feature>
<feature type="glycosylation site" description="N-linked (GlcNAc...) asparagine" evidence="4">
    <location>
        <position position="368"/>
    </location>
</feature>
<feature type="glycosylation site" description="N-linked (GlcNAc...) asparagine" evidence="4">
    <location>
        <position position="418"/>
    </location>
</feature>
<feature type="glycosylation site" description="N-linked (GlcNAc...) asparagine" evidence="4">
    <location>
        <position position="512"/>
    </location>
</feature>
<feature type="glycosylation site" description="N-linked (GlcNAc...) asparagine" evidence="4">
    <location>
        <position position="821"/>
    </location>
</feature>
<feature type="glycosylation site" description="N-linked (GlcNAc...) asparagine" evidence="4">
    <location>
        <position position="934"/>
    </location>
</feature>
<feature type="glycosylation site" description="N-linked (GlcNAc...) asparagine" evidence="4">
    <location>
        <position position="946"/>
    </location>
</feature>
<feature type="glycosylation site" description="N-linked (GlcNAc...) asparagine" evidence="4">
    <location>
        <position position="989"/>
    </location>
</feature>
<feature type="glycosylation site" description="N-linked (GlcNAc...) asparagine" evidence="4">
    <location>
        <position position="1174"/>
    </location>
</feature>
<feature type="glycosylation site" description="N-linked (GlcNAc...) asparagine" evidence="4">
    <location>
        <position position="1340"/>
    </location>
</feature>
<feature type="glycosylation site" description="N-linked (GlcNAc...) asparagine" evidence="4">
    <location>
        <position position="1508"/>
    </location>
</feature>
<feature type="glycosylation site" description="N-linked (GlcNAc...) asparagine" evidence="4">
    <location>
        <position position="1656"/>
    </location>
</feature>
<feature type="glycosylation site" description="N-linked (GlcNAc...) asparagine" evidence="4">
    <location>
        <position position="1672"/>
    </location>
</feature>
<feature type="glycosylation site" description="N-linked (GlcNAc...) asparagine" evidence="4">
    <location>
        <position position="1761"/>
    </location>
</feature>
<feature type="glycosylation site" description="N-linked (GlcNAc...) asparagine" evidence="4">
    <location>
        <position position="1814"/>
    </location>
</feature>
<feature type="sequence variant" id="VAR_055882" description="In dbSNP:rs35156533.">
    <original>S</original>
    <variation>L</variation>
    <location>
        <position position="190"/>
    </location>
</feature>
<feature type="sequence variant" id="VAR_026705" description="In dbSNP:rs3754689." evidence="9">
    <original>V</original>
    <variation>I</variation>
    <location>
        <position position="219"/>
    </location>
</feature>
<feature type="sequence variant" id="VAR_026706" description="In COLACD; dbSNP:rs121908937." evidence="8">
    <original>Q</original>
    <variation>H</variation>
    <location>
        <position position="268"/>
    </location>
</feature>
<feature type="sequence variant" id="VAR_026707" description="In dbSNP:rs4954449." evidence="9 10">
    <original>I</original>
    <variation>V</variation>
    <location>
        <position position="362"/>
    </location>
</feature>
<feature type="sequence variant" id="VAR_026708" description="In COLACD; dbSNP:rs386833833." evidence="8">
    <original>G</original>
    <variation>S</variation>
    <location>
        <position position="1363"/>
    </location>
</feature>
<feature type="sequence variant" id="VAR_055883" description="In dbSNP:rs35891837.">
    <original>V</original>
    <variation>M</variation>
    <location>
        <position position="1593"/>
    </location>
</feature>
<feature type="sequence variant" id="VAR_026709" description="In dbSNP:rs2322659." evidence="9">
    <original>N</original>
    <variation>S</variation>
    <location>
        <position position="1639"/>
    </location>
</feature>
<feature type="mutagenesis site" description="No effect on lactase activity. Decreased phlorizin hydrolase activity. No effect on localization to the plasma membrane." evidence="13">
    <original>E</original>
    <variation>G</variation>
    <location>
        <position position="1273"/>
    </location>
</feature>
<feature type="mutagenesis site" description="Loss of lactase activity. No effect on phlorizin hydrolase activity. No effect on localization to the plasma membrane." evidence="13">
    <original>E</original>
    <variation>G</variation>
    <location>
        <position position="1749"/>
    </location>
</feature>
<feature type="sequence conflict" description="In Ref. 1; CAA30801." evidence="15" ref="1">
    <original>A</original>
    <variation>T</variation>
    <location>
        <position position="1096"/>
    </location>
</feature>
<sequence>MELSWHVVFIALLSFSCWGSDWESDRNFISTAGPLTNDLLHNLSGLLGDQSSNFVAGDKDMYVCHQPLPTFLPEYFSSLHASQITHYKVFLSWAQLLPAGSTQNPDEKTVQCYRRLLKALKTARLQPMVILHHQTLPASTLRRTEAFADLFADYATFAFHSFGDLVGIWFTFSDLEEVIKELPHQESRASQLQTLSDAHRKAYEIYHESYAFQGGKLSVVLRAEDIPELLLEPPISALAQDTVDFLSLDLSYECQNEASLRQKLSKLQTIEPKVKVFIFNLKLPDCPSTMKNPASLLFSLFEAINKDQVLTIGFDINEFLSCSSSSKKSMSCSLTGSLALQPDQQQDHETTDSSPASAYQRIWEAFANQSRAERDAFLQDTFPEGFLWGASTGAFNVEGGWAEGGRGVSIWDPRRPLNTTEGQATLEVASDSYHKVASDVALLCGLRAQVYKFSISWSRIFPMGHGSSPSLPGVAYYNKLIDRLQDAGIEPMATLFHWDLPQALQDHGGWQNESVVDAFLDYAAFCFSTFGDRVKLWVTFHEPWVMSYAGYGTGQHPPGISDPGVASFKVAHLVLKAHARTWHHYNSHHRPQQQGHVGIVLNSDWAEPLSPERPEDLRASERFLHFMLGWFAHPVFVDGDYPATLRTQIQQMNRQCSHPVAQLPEFTEAEKQLLKGSADFLGLSHYTSRLISNAPQNTCIPSYDTIGGFSQHVNHVWPQTSSSWIRVVPWGIRRLLQFVSLEYTRGKVPIYLAGNGMPIGESENLFDDSLRVDYFNQYINEVLKAIKEDSVDVRSYIARSLIDGFEGPSGYSQRFGLHHVNFSDSSKSRTPRKSAYFFTSIIEKNGFLTKGAKRLLPPNTVNLPSKVRAFTFPSEVPSKAKVVWEKFSSQPKFERDLFYHGTFRDDFLWGVSSSAYQIEGAWDADGKGPSIWDNFTHTPGSNVKDNATGDIACDSYHQLDADLNMLRALKVKAYRFSISWSRIFPTGRNSSINSHGVDYYNRLINGLVASNIFPMVTLFHWDLPQALQDIGGWENPALIDLFDSYADFCFQTFGDRVKFWMTFNEPMYLAWLGYGSGEFPPGVKDPGWAPYRIAHAVIKAHARVYHTYDEKYRQEQKGVISLSLSTHWAEPKSPGVPRDVEAADRMLQFSLGWFAHPIFRNGDYPDTMKWKVGNRSELQHLATSRLPSFTEEEKRFIRATADVFCLNTYYSRIVQHKTPRLNPPSYEDDQEMAEEEDPSWPSTAMNRAAPWGTRRLLNWIKEEYGDIPIYITENGVGLTNPNTEDTDRIFYHKTYINEALKAYRLDGIDLRGYVAWSLMDNFEWLNGYTVKFGLYHVDFNNTNRPRTARASARYYTEVITNNGMPLAREDEFLYGRFPEGFIWSAASAAYQIEGAWRADGKGLSIWDTFSHTPLRVENDAIGDVACDSYHKIAEDLVTLQNLGVSHYRFSISWSRILPDGTTRYINEAGLNYYVRLIDTLLAASIQPQVTIYHWDLPQTLQDVGGWENETIVQRFKEYADVLFQRLGDKVKFWITLNEPFVIAYQGYGYGTAAPGVSNRPGTAPYIVGHNLIKAHAEAWHLYNDVYRASQGGVISITISSDWAEPRDPSNQEDVEAARRYVQFMGGWFAHPIFKNGDYNEVMKTRIRDRSLAAGLNKSRLPEFTESEKRRINGTYDFFGFNHYTTVLAYNLNYATAISSFDADRGVASIADRSWPDSGSFWLKMTPFGFRRILNWLKEEYNDPPIYVTENGVSQREETDLNDTARIYYLRTYINEALKAVQDKVDLRGYTVWSAMDNFEWATGFSERFGLHFVNYSDPSLPRIPKASAKFYASVVRCNGFPDPATGPHACLHQPDAGPTISPVRQEEVQFLGLMLGTTEAQTALYVLFSLVLLGVCGLAFLSYKYCKRSKQGKTQRSQQELSPVSSF</sequence>
<organism>
    <name type="scientific">Homo sapiens</name>
    <name type="common">Human</name>
    <dbReference type="NCBI Taxonomy" id="9606"/>
    <lineage>
        <taxon>Eukaryota</taxon>
        <taxon>Metazoa</taxon>
        <taxon>Chordata</taxon>
        <taxon>Craniata</taxon>
        <taxon>Vertebrata</taxon>
        <taxon>Euteleostomi</taxon>
        <taxon>Mammalia</taxon>
        <taxon>Eutheria</taxon>
        <taxon>Euarchontoglires</taxon>
        <taxon>Primates</taxon>
        <taxon>Haplorrhini</taxon>
        <taxon>Catarrhini</taxon>
        <taxon>Hominidae</taxon>
        <taxon>Homo</taxon>
    </lineage>
</organism>
<comment type="function">
    <text evidence="7 8 11 13">Broad specificity glycosidase of the intestinal brush border membrane that hydrolyzes lactose, the main sugar in mammalian milk, to produce D-glucose and D-galactose (PubMed:12594539, PubMed:16400612, PubMed:3929764, PubMed:9762914). The mature protein is composed of two domains that catalyze the hydrolysis of beta-glucopyranosides and beta-galactopyranosides, with a preference for hydrophilic aglycones (in lactose and cellobiose) for one domain and hydrophobic aglycones (in phlorizin and glycosylceramides) for the other (PubMed:12594539, PubMed:3929764, PubMed:9762914).</text>
</comment>
<comment type="catalytic activity">
    <reaction evidence="7 8 11 13">
        <text>lactose + H2O = beta-D-galactose + D-glucose</text>
        <dbReference type="Rhea" id="RHEA:10076"/>
        <dbReference type="ChEBI" id="CHEBI:4167"/>
        <dbReference type="ChEBI" id="CHEBI:15377"/>
        <dbReference type="ChEBI" id="CHEBI:17716"/>
        <dbReference type="ChEBI" id="CHEBI:27667"/>
        <dbReference type="EC" id="3.2.1.108"/>
    </reaction>
    <physiologicalReaction direction="left-to-right" evidence="8">
        <dbReference type="Rhea" id="RHEA:10077"/>
    </physiologicalReaction>
</comment>
<comment type="catalytic activity">
    <reaction evidence="7 11 13">
        <text>phlorizin + H2O = phloretin + beta-D-glucose</text>
        <dbReference type="Rhea" id="RHEA:69639"/>
        <dbReference type="ChEBI" id="CHEBI:8113"/>
        <dbReference type="ChEBI" id="CHEBI:15377"/>
        <dbReference type="ChEBI" id="CHEBI:15903"/>
        <dbReference type="ChEBI" id="CHEBI:17276"/>
    </reaction>
    <physiologicalReaction direction="left-to-right" evidence="18">
        <dbReference type="Rhea" id="RHEA:69640"/>
    </physiologicalReaction>
</comment>
<comment type="catalytic activity">
    <reaction evidence="11">
        <text>D-cellobiose + H2O = beta-D-glucose + D-glucose</text>
        <dbReference type="Rhea" id="RHEA:30679"/>
        <dbReference type="ChEBI" id="CHEBI:4167"/>
        <dbReference type="ChEBI" id="CHEBI:15377"/>
        <dbReference type="ChEBI" id="CHEBI:15903"/>
        <dbReference type="ChEBI" id="CHEBI:17057"/>
    </reaction>
    <physiologicalReaction direction="left-to-right" evidence="18">
        <dbReference type="Rhea" id="RHEA:30680"/>
    </physiologicalReaction>
</comment>
<comment type="catalytic activity">
    <reaction evidence="7">
        <text>quercetin 4'-O-beta-D-glucoside + H2O = quercetin + beta-D-glucose</text>
        <dbReference type="Rhea" id="RHEA:69647"/>
        <dbReference type="ChEBI" id="CHEBI:15377"/>
        <dbReference type="ChEBI" id="CHEBI:15903"/>
        <dbReference type="ChEBI" id="CHEBI:57694"/>
        <dbReference type="ChEBI" id="CHEBI:187902"/>
    </reaction>
    <physiologicalReaction direction="left-to-right" evidence="16">
        <dbReference type="Rhea" id="RHEA:69648"/>
    </physiologicalReaction>
</comment>
<comment type="catalytic activity">
    <reaction evidence="7">
        <text>quercetin 3-O-beta-D-glucoside + H2O = quercetin + beta-D-glucose</text>
        <dbReference type="Rhea" id="RHEA:69655"/>
        <dbReference type="ChEBI" id="CHEBI:15377"/>
        <dbReference type="ChEBI" id="CHEBI:15903"/>
        <dbReference type="ChEBI" id="CHEBI:57694"/>
        <dbReference type="ChEBI" id="CHEBI:144437"/>
    </reaction>
    <physiologicalReaction direction="left-to-right" evidence="16">
        <dbReference type="Rhea" id="RHEA:69656"/>
    </physiologicalReaction>
</comment>
<comment type="catalytic activity">
    <reaction evidence="3">
        <text>kaempferol 3-O-beta-D-glucoside + H2O = kaempferol + beta-D-glucose</text>
        <dbReference type="Rhea" id="RHEA:69659"/>
        <dbReference type="ChEBI" id="CHEBI:15377"/>
        <dbReference type="ChEBI" id="CHEBI:15903"/>
        <dbReference type="ChEBI" id="CHEBI:58573"/>
        <dbReference type="ChEBI" id="CHEBI:169942"/>
    </reaction>
    <physiologicalReaction direction="left-to-right" evidence="3">
        <dbReference type="Rhea" id="RHEA:69660"/>
    </physiologicalReaction>
</comment>
<comment type="catalytic activity">
    <reaction evidence="3">
        <text>luteolin 7-O-beta-D-glucoside + H2O = luteolin + beta-D-glucose</text>
        <dbReference type="Rhea" id="RHEA:69663"/>
        <dbReference type="ChEBI" id="CHEBI:15377"/>
        <dbReference type="ChEBI" id="CHEBI:15903"/>
        <dbReference type="ChEBI" id="CHEBI:57545"/>
        <dbReference type="ChEBI" id="CHEBI:77791"/>
    </reaction>
    <physiologicalReaction direction="left-to-right" evidence="3">
        <dbReference type="Rhea" id="RHEA:69664"/>
    </physiologicalReaction>
</comment>
<comment type="catalytic activity">
    <reaction evidence="3">
        <text>luteolin 4'-O-beta-D-glucoside + H2O = luteolin + beta-D-glucose</text>
        <dbReference type="Rhea" id="RHEA:69667"/>
        <dbReference type="ChEBI" id="CHEBI:15377"/>
        <dbReference type="ChEBI" id="CHEBI:15903"/>
        <dbReference type="ChEBI" id="CHEBI:57545"/>
        <dbReference type="ChEBI" id="CHEBI:187903"/>
    </reaction>
    <physiologicalReaction direction="left-to-right" evidence="3">
        <dbReference type="Rhea" id="RHEA:69668"/>
    </physiologicalReaction>
</comment>
<comment type="catalytic activity">
    <reaction evidence="3">
        <text>(2S)-naringenin 7-O-beta-D-glucoside + H2O = (2S)-naringenin + beta-D-glucose</text>
        <dbReference type="Rhea" id="RHEA:69671"/>
        <dbReference type="ChEBI" id="CHEBI:15377"/>
        <dbReference type="ChEBI" id="CHEBI:15903"/>
        <dbReference type="ChEBI" id="CHEBI:17846"/>
        <dbReference type="ChEBI" id="CHEBI:28327"/>
    </reaction>
    <physiologicalReaction direction="left-to-right" evidence="3">
        <dbReference type="Rhea" id="RHEA:69672"/>
    </physiologicalReaction>
</comment>
<comment type="catalytic activity">
    <reaction evidence="3">
        <text>eriodictyol-7-O-beta-D-glucoside + H2O = (S)-eriodictyol + beta-D-glucose</text>
        <dbReference type="Rhea" id="RHEA:69675"/>
        <dbReference type="ChEBI" id="CHEBI:15377"/>
        <dbReference type="ChEBI" id="CHEBI:15903"/>
        <dbReference type="ChEBI" id="CHEBI:28412"/>
        <dbReference type="ChEBI" id="CHEBI:139458"/>
    </reaction>
    <physiologicalReaction direction="left-to-right" evidence="3">
        <dbReference type="Rhea" id="RHEA:69676"/>
    </physiologicalReaction>
</comment>
<comment type="catalytic activity">
    <reaction evidence="3">
        <text>apigenin 7-O-beta-D-glucoside + H2O = apigenin + beta-D-glucose</text>
        <dbReference type="Rhea" id="RHEA:69679"/>
        <dbReference type="ChEBI" id="CHEBI:15377"/>
        <dbReference type="ChEBI" id="CHEBI:15903"/>
        <dbReference type="ChEBI" id="CHEBI:58470"/>
        <dbReference type="ChEBI" id="CHEBI:77722"/>
    </reaction>
    <physiologicalReaction direction="left-to-right" evidence="3">
        <dbReference type="Rhea" id="RHEA:69680"/>
    </physiologicalReaction>
</comment>
<comment type="catalytic activity">
    <reaction evidence="3">
        <text>daidzein 7-O-beta-D-glucoside + H2O = daidzein + beta-D-glucose + H(+)</text>
        <dbReference type="Rhea" id="RHEA:69683"/>
        <dbReference type="ChEBI" id="CHEBI:15377"/>
        <dbReference type="ChEBI" id="CHEBI:15378"/>
        <dbReference type="ChEBI" id="CHEBI:15903"/>
        <dbReference type="ChEBI" id="CHEBI:42202"/>
        <dbReference type="ChEBI" id="CHEBI:77764"/>
    </reaction>
    <physiologicalReaction direction="left-to-right" evidence="3">
        <dbReference type="Rhea" id="RHEA:69684"/>
    </physiologicalReaction>
</comment>
<comment type="catalytic activity">
    <reaction evidence="3">
        <text>genistein 7-O-beta-D-glucoside + H2O = genistein + beta-D-glucose</text>
        <dbReference type="Rhea" id="RHEA:69687"/>
        <dbReference type="ChEBI" id="CHEBI:15377"/>
        <dbReference type="ChEBI" id="CHEBI:15903"/>
        <dbReference type="ChEBI" id="CHEBI:74224"/>
        <dbReference type="ChEBI" id="CHEBI:140305"/>
    </reaction>
    <physiologicalReaction direction="left-to-right" evidence="3">
        <dbReference type="Rhea" id="RHEA:69688"/>
    </physiologicalReaction>
</comment>
<comment type="catalytic activity">
    <reaction evidence="2">
        <text>a beta-D-galactosyl-N-acylsphingosine + H2O = a ceramide + beta-D-galactose.</text>
        <dbReference type="EC" id="3.2.1.62"/>
    </reaction>
</comment>
<comment type="catalytic activity">
    <reaction evidence="2">
        <text>beta-D-glucosyl-(1&lt;-&gt;1')-N-hexadecanoylsphing-4-enine + H2O = N-hexadecanoylsphing-4-enine + beta-D-glucose</text>
        <dbReference type="Rhea" id="RHEA:69699"/>
        <dbReference type="ChEBI" id="CHEBI:15377"/>
        <dbReference type="ChEBI" id="CHEBI:15903"/>
        <dbReference type="ChEBI" id="CHEBI:72959"/>
        <dbReference type="ChEBI" id="CHEBI:84716"/>
    </reaction>
    <physiologicalReaction direction="left-to-right" evidence="2">
        <dbReference type="Rhea" id="RHEA:69700"/>
    </physiologicalReaction>
</comment>
<comment type="catalytic activity">
    <reaction evidence="2">
        <text>beta-D-galactosyl-(1&lt;-&gt;1')-N-hexadecanoylsphing-4-enine + H2O = beta-D-galactose + N-hexadecanoylsphing-4-enine</text>
        <dbReference type="Rhea" id="RHEA:69703"/>
        <dbReference type="ChEBI" id="CHEBI:15377"/>
        <dbReference type="ChEBI" id="CHEBI:27667"/>
        <dbReference type="ChEBI" id="CHEBI:72959"/>
        <dbReference type="ChEBI" id="CHEBI:83259"/>
    </reaction>
    <physiologicalReaction direction="left-to-right" evidence="2">
        <dbReference type="Rhea" id="RHEA:69704"/>
    </physiologicalReaction>
</comment>
<comment type="catalytic activity">
    <reaction evidence="2">
        <text>beta-D-galactosyl-(1&lt;-&gt;1')-N-hexadecanoylsphinganine + H2O = N-hexadecanoylsphinganine + beta-D-galactose</text>
        <dbReference type="Rhea" id="RHEA:69707"/>
        <dbReference type="ChEBI" id="CHEBI:15377"/>
        <dbReference type="ChEBI" id="CHEBI:27667"/>
        <dbReference type="ChEBI" id="CHEBI:67042"/>
        <dbReference type="ChEBI" id="CHEBI:84783"/>
    </reaction>
    <physiologicalReaction direction="left-to-right" evidence="2">
        <dbReference type="Rhea" id="RHEA:69708"/>
    </physiologicalReaction>
</comment>
<comment type="catalytic activity">
    <reaction evidence="2">
        <text>beta-D-glucosyl-(1&lt;-&gt;1')-N-hexadecanoylsphinganine + H2O = N-hexadecanoylsphinganine + beta-D-glucose</text>
        <dbReference type="Rhea" id="RHEA:69711"/>
        <dbReference type="ChEBI" id="CHEBI:15377"/>
        <dbReference type="ChEBI" id="CHEBI:15903"/>
        <dbReference type="ChEBI" id="CHEBI:67042"/>
        <dbReference type="ChEBI" id="CHEBI:84782"/>
    </reaction>
    <physiologicalReaction direction="left-to-right" evidence="2">
        <dbReference type="Rhea" id="RHEA:69712"/>
    </physiologicalReaction>
</comment>
<comment type="subunit">
    <text evidence="11 12">Homodimer.</text>
</comment>
<comment type="subcellular location">
    <subcellularLocation>
        <location evidence="12">Apical cell membrane</location>
        <topology evidence="19">Single-pass type I membrane protein</topology>
    </subcellularLocation>
    <text evidence="1">Brush border.</text>
</comment>
<comment type="tissue specificity">
    <text evidence="10">Specifically expressed in small intestine.</text>
</comment>
<comment type="domain">
    <text evidence="13">The glycosyl hydrolase-1 3/region III carries the phlorizin hydrolase/glycosylceramidase activities.</text>
</comment>
<comment type="domain">
    <text evidence="13">The glycosyl hydrolase-1 4/region IV carries the lactase activity.</text>
</comment>
<comment type="PTM">
    <text evidence="12">N-glycosylated.</text>
</comment>
<comment type="disease" evidence="8">
    <disease id="DI-01406">
        <name>Congenital lactase deficiency</name>
        <acronym>COLACD</acronym>
        <description>Autosomal recessive, rare and severe gastrointestinal disorder. It is characterized by watery diarrhea in infants fed with breast milk or other lactose-containing formulas. An almost total lack of LCT activity is found in jejunal biopsy material of patients with congenital lactase deficiency. Opposite to congenital lactase deficiency, also known as lactose intolerance, is the most common enzyme deficiency worldwide. It is caused by developmental down-regulation of lactase activity during childhood or early adulthood. The decline of lactase activity is a normal physiological phenomenon; however, the majority of Northern Europeans have the ability to maintain lactase activity and digest lactose throughout life (lactase persistence). The down-regulation of lactase activity operates at the transcriptional level and it is associated with a noncoding variation in the MCM6 gene, located in the upstream vicinity of LCT.</description>
        <dbReference type="MIM" id="223000"/>
    </disease>
    <text>The disease is caused by variants affecting the gene represented in this entry.</text>
</comment>
<comment type="similarity">
    <text evidence="15">Belongs to the glycosyl hydrolase 1 family.</text>
</comment>
<comment type="online information" name="Wikipedia">
    <link uri="https://en.wikipedia.org/wiki/Lactase"/>
    <text>Lactase entry</text>
</comment>
<comment type="online information" name="Protein Spotlight">
    <link uri="https://www.proteinspotlight.org/back_issues/111"/>
    <text>Darwin's dessert - Issue 111 of November 2009</text>
</comment>
<accession>P09848</accession>
<accession>Q4ZG58</accession>